<gene>
    <name evidence="1" type="primary">rpsQ</name>
    <name type="ordered locus">NFA_7420</name>
</gene>
<organism>
    <name type="scientific">Nocardia farcinica (strain IFM 10152)</name>
    <dbReference type="NCBI Taxonomy" id="247156"/>
    <lineage>
        <taxon>Bacteria</taxon>
        <taxon>Bacillati</taxon>
        <taxon>Actinomycetota</taxon>
        <taxon>Actinomycetes</taxon>
        <taxon>Mycobacteriales</taxon>
        <taxon>Nocardiaceae</taxon>
        <taxon>Nocardia</taxon>
    </lineage>
</organism>
<reference key="1">
    <citation type="journal article" date="2004" name="Proc. Natl. Acad. Sci. U.S.A.">
        <title>The complete genomic sequence of Nocardia farcinica IFM 10152.</title>
        <authorList>
            <person name="Ishikawa J."/>
            <person name="Yamashita A."/>
            <person name="Mikami Y."/>
            <person name="Hoshino Y."/>
            <person name="Kurita H."/>
            <person name="Hotta K."/>
            <person name="Shiba T."/>
            <person name="Hattori M."/>
        </authorList>
    </citation>
    <scope>NUCLEOTIDE SEQUENCE [LARGE SCALE GENOMIC DNA]</scope>
    <source>
        <strain>IFM 10152</strain>
    </source>
</reference>
<sequence length="89" mass="10302">MSEKTVERGRRKVRIGYVVSDKMNKTIVVELEDRVKHPLYGKIIRTTSKVKAHDENEIAGVGDRVQLMETRPLSATKRWRLVEVLEKAK</sequence>
<accession>Q5Z1V4</accession>
<evidence type="ECO:0000255" key="1">
    <source>
        <dbReference type="HAMAP-Rule" id="MF_01345"/>
    </source>
</evidence>
<evidence type="ECO:0000305" key="2"/>
<name>RS17_NOCFA</name>
<dbReference type="EMBL" id="AP006618">
    <property type="protein sequence ID" value="BAD55587.1"/>
    <property type="molecule type" value="Genomic_DNA"/>
</dbReference>
<dbReference type="RefSeq" id="WP_011207273.1">
    <property type="nucleotide sequence ID" value="NC_006361.1"/>
</dbReference>
<dbReference type="SMR" id="Q5Z1V4"/>
<dbReference type="STRING" id="247156.NFA_7420"/>
<dbReference type="GeneID" id="61131573"/>
<dbReference type="KEGG" id="nfa:NFA_7420"/>
<dbReference type="eggNOG" id="COG0186">
    <property type="taxonomic scope" value="Bacteria"/>
</dbReference>
<dbReference type="HOGENOM" id="CLU_073626_1_0_11"/>
<dbReference type="OrthoDB" id="9811714at2"/>
<dbReference type="Proteomes" id="UP000006820">
    <property type="component" value="Chromosome"/>
</dbReference>
<dbReference type="GO" id="GO:0022627">
    <property type="term" value="C:cytosolic small ribosomal subunit"/>
    <property type="evidence" value="ECO:0007669"/>
    <property type="project" value="TreeGrafter"/>
</dbReference>
<dbReference type="GO" id="GO:0019843">
    <property type="term" value="F:rRNA binding"/>
    <property type="evidence" value="ECO:0007669"/>
    <property type="project" value="UniProtKB-UniRule"/>
</dbReference>
<dbReference type="GO" id="GO:0003735">
    <property type="term" value="F:structural constituent of ribosome"/>
    <property type="evidence" value="ECO:0007669"/>
    <property type="project" value="InterPro"/>
</dbReference>
<dbReference type="GO" id="GO:0006412">
    <property type="term" value="P:translation"/>
    <property type="evidence" value="ECO:0007669"/>
    <property type="project" value="UniProtKB-UniRule"/>
</dbReference>
<dbReference type="CDD" id="cd00364">
    <property type="entry name" value="Ribosomal_uS17"/>
    <property type="match status" value="1"/>
</dbReference>
<dbReference type="FunFam" id="2.40.50.140:FF:000026">
    <property type="entry name" value="30S ribosomal protein S17"/>
    <property type="match status" value="1"/>
</dbReference>
<dbReference type="Gene3D" id="2.40.50.140">
    <property type="entry name" value="Nucleic acid-binding proteins"/>
    <property type="match status" value="1"/>
</dbReference>
<dbReference type="HAMAP" id="MF_01345_B">
    <property type="entry name" value="Ribosomal_uS17_B"/>
    <property type="match status" value="1"/>
</dbReference>
<dbReference type="InterPro" id="IPR012340">
    <property type="entry name" value="NA-bd_OB-fold"/>
</dbReference>
<dbReference type="InterPro" id="IPR000266">
    <property type="entry name" value="Ribosomal_uS17"/>
</dbReference>
<dbReference type="InterPro" id="IPR019984">
    <property type="entry name" value="Ribosomal_uS17_bact/chlr"/>
</dbReference>
<dbReference type="InterPro" id="IPR019979">
    <property type="entry name" value="Ribosomal_uS17_CS"/>
</dbReference>
<dbReference type="NCBIfam" id="NF004123">
    <property type="entry name" value="PRK05610.1"/>
    <property type="match status" value="1"/>
</dbReference>
<dbReference type="NCBIfam" id="TIGR03635">
    <property type="entry name" value="uS17_bact"/>
    <property type="match status" value="1"/>
</dbReference>
<dbReference type="PANTHER" id="PTHR10744">
    <property type="entry name" value="40S RIBOSOMAL PROTEIN S11 FAMILY MEMBER"/>
    <property type="match status" value="1"/>
</dbReference>
<dbReference type="PANTHER" id="PTHR10744:SF1">
    <property type="entry name" value="SMALL RIBOSOMAL SUBUNIT PROTEIN US17M"/>
    <property type="match status" value="1"/>
</dbReference>
<dbReference type="Pfam" id="PF00366">
    <property type="entry name" value="Ribosomal_S17"/>
    <property type="match status" value="1"/>
</dbReference>
<dbReference type="PRINTS" id="PR00973">
    <property type="entry name" value="RIBOSOMALS17"/>
</dbReference>
<dbReference type="SUPFAM" id="SSF50249">
    <property type="entry name" value="Nucleic acid-binding proteins"/>
    <property type="match status" value="1"/>
</dbReference>
<dbReference type="PROSITE" id="PS00056">
    <property type="entry name" value="RIBOSOMAL_S17"/>
    <property type="match status" value="1"/>
</dbReference>
<comment type="function">
    <text evidence="1">One of the primary rRNA binding proteins, it binds specifically to the 5'-end of 16S ribosomal RNA.</text>
</comment>
<comment type="subunit">
    <text evidence="1">Part of the 30S ribosomal subunit.</text>
</comment>
<comment type="similarity">
    <text evidence="1">Belongs to the universal ribosomal protein uS17 family.</text>
</comment>
<protein>
    <recommendedName>
        <fullName evidence="1">Small ribosomal subunit protein uS17</fullName>
    </recommendedName>
    <alternativeName>
        <fullName evidence="2">30S ribosomal protein S17</fullName>
    </alternativeName>
</protein>
<keyword id="KW-1185">Reference proteome</keyword>
<keyword id="KW-0687">Ribonucleoprotein</keyword>
<keyword id="KW-0689">Ribosomal protein</keyword>
<keyword id="KW-0694">RNA-binding</keyword>
<keyword id="KW-0699">rRNA-binding</keyword>
<proteinExistence type="inferred from homology"/>
<feature type="chain" id="PRO_0000233523" description="Small ribosomal subunit protein uS17">
    <location>
        <begin position="1"/>
        <end position="89"/>
    </location>
</feature>